<feature type="chain" id="PRO_1000009633" description="Phosphoglycerate kinase">
    <location>
        <begin position="1"/>
        <end position="407"/>
    </location>
</feature>
<feature type="binding site" evidence="1">
    <location>
        <begin position="27"/>
        <end position="29"/>
    </location>
    <ligand>
        <name>substrate</name>
    </ligand>
</feature>
<feature type="binding site" evidence="1">
    <location>
        <position position="43"/>
    </location>
    <ligand>
        <name>substrate</name>
    </ligand>
</feature>
<feature type="binding site" evidence="1">
    <location>
        <begin position="66"/>
        <end position="69"/>
    </location>
    <ligand>
        <name>substrate</name>
    </ligand>
</feature>
<feature type="binding site" evidence="1">
    <location>
        <position position="125"/>
    </location>
    <ligand>
        <name>substrate</name>
    </ligand>
</feature>
<feature type="binding site" evidence="1">
    <location>
        <position position="165"/>
    </location>
    <ligand>
        <name>substrate</name>
    </ligand>
</feature>
<feature type="binding site" evidence="1">
    <location>
        <position position="215"/>
    </location>
    <ligand>
        <name>ATP</name>
        <dbReference type="ChEBI" id="CHEBI:30616"/>
    </ligand>
</feature>
<feature type="binding site" evidence="1">
    <location>
        <position position="303"/>
    </location>
    <ligand>
        <name>ATP</name>
        <dbReference type="ChEBI" id="CHEBI:30616"/>
    </ligand>
</feature>
<feature type="binding site" evidence="1">
    <location>
        <position position="334"/>
    </location>
    <ligand>
        <name>ATP</name>
        <dbReference type="ChEBI" id="CHEBI:30616"/>
    </ligand>
</feature>
<feature type="binding site" evidence="1">
    <location>
        <begin position="363"/>
        <end position="366"/>
    </location>
    <ligand>
        <name>ATP</name>
        <dbReference type="ChEBI" id="CHEBI:30616"/>
    </ligand>
</feature>
<proteinExistence type="inferred from homology"/>
<name>PGK_MYCSK</name>
<keyword id="KW-0067">ATP-binding</keyword>
<keyword id="KW-0963">Cytoplasm</keyword>
<keyword id="KW-0324">Glycolysis</keyword>
<keyword id="KW-0418">Kinase</keyword>
<keyword id="KW-0547">Nucleotide-binding</keyword>
<keyword id="KW-0808">Transferase</keyword>
<accession>A1UFP0</accession>
<evidence type="ECO:0000255" key="1">
    <source>
        <dbReference type="HAMAP-Rule" id="MF_00145"/>
    </source>
</evidence>
<dbReference type="EC" id="2.7.2.3" evidence="1"/>
<dbReference type="EMBL" id="CP000518">
    <property type="protein sequence ID" value="ABL91648.1"/>
    <property type="molecule type" value="Genomic_DNA"/>
</dbReference>
<dbReference type="SMR" id="A1UFP0"/>
<dbReference type="STRING" id="189918.Mkms_2451"/>
<dbReference type="KEGG" id="mkm:Mkms_2451"/>
<dbReference type="HOGENOM" id="CLU_025427_0_2_11"/>
<dbReference type="OrthoDB" id="9808460at2"/>
<dbReference type="UniPathway" id="UPA00109">
    <property type="reaction ID" value="UER00185"/>
</dbReference>
<dbReference type="GO" id="GO:0005829">
    <property type="term" value="C:cytosol"/>
    <property type="evidence" value="ECO:0007669"/>
    <property type="project" value="TreeGrafter"/>
</dbReference>
<dbReference type="GO" id="GO:0043531">
    <property type="term" value="F:ADP binding"/>
    <property type="evidence" value="ECO:0007669"/>
    <property type="project" value="TreeGrafter"/>
</dbReference>
<dbReference type="GO" id="GO:0005524">
    <property type="term" value="F:ATP binding"/>
    <property type="evidence" value="ECO:0007669"/>
    <property type="project" value="UniProtKB-KW"/>
</dbReference>
<dbReference type="GO" id="GO:0004618">
    <property type="term" value="F:phosphoglycerate kinase activity"/>
    <property type="evidence" value="ECO:0007669"/>
    <property type="project" value="UniProtKB-UniRule"/>
</dbReference>
<dbReference type="GO" id="GO:0006094">
    <property type="term" value="P:gluconeogenesis"/>
    <property type="evidence" value="ECO:0007669"/>
    <property type="project" value="TreeGrafter"/>
</dbReference>
<dbReference type="GO" id="GO:0006096">
    <property type="term" value="P:glycolytic process"/>
    <property type="evidence" value="ECO:0007669"/>
    <property type="project" value="UniProtKB-UniRule"/>
</dbReference>
<dbReference type="CDD" id="cd00318">
    <property type="entry name" value="Phosphoglycerate_kinase"/>
    <property type="match status" value="1"/>
</dbReference>
<dbReference type="FunFam" id="3.40.50.1260:FF:000006">
    <property type="entry name" value="Phosphoglycerate kinase"/>
    <property type="match status" value="1"/>
</dbReference>
<dbReference type="FunFam" id="3.40.50.1260:FF:000031">
    <property type="entry name" value="Phosphoglycerate kinase 1"/>
    <property type="match status" value="1"/>
</dbReference>
<dbReference type="Gene3D" id="3.40.50.1260">
    <property type="entry name" value="Phosphoglycerate kinase, N-terminal domain"/>
    <property type="match status" value="2"/>
</dbReference>
<dbReference type="HAMAP" id="MF_00145">
    <property type="entry name" value="Phosphoglyc_kinase"/>
    <property type="match status" value="1"/>
</dbReference>
<dbReference type="InterPro" id="IPR001576">
    <property type="entry name" value="Phosphoglycerate_kinase"/>
</dbReference>
<dbReference type="InterPro" id="IPR015911">
    <property type="entry name" value="Phosphoglycerate_kinase_CS"/>
</dbReference>
<dbReference type="InterPro" id="IPR015824">
    <property type="entry name" value="Phosphoglycerate_kinase_N"/>
</dbReference>
<dbReference type="InterPro" id="IPR036043">
    <property type="entry name" value="Phosphoglycerate_kinase_sf"/>
</dbReference>
<dbReference type="PANTHER" id="PTHR11406">
    <property type="entry name" value="PHOSPHOGLYCERATE KINASE"/>
    <property type="match status" value="1"/>
</dbReference>
<dbReference type="PANTHER" id="PTHR11406:SF23">
    <property type="entry name" value="PHOSPHOGLYCERATE KINASE 1, CHLOROPLASTIC-RELATED"/>
    <property type="match status" value="1"/>
</dbReference>
<dbReference type="Pfam" id="PF00162">
    <property type="entry name" value="PGK"/>
    <property type="match status" value="1"/>
</dbReference>
<dbReference type="PIRSF" id="PIRSF000724">
    <property type="entry name" value="Pgk"/>
    <property type="match status" value="1"/>
</dbReference>
<dbReference type="PRINTS" id="PR00477">
    <property type="entry name" value="PHGLYCKINASE"/>
</dbReference>
<dbReference type="SUPFAM" id="SSF53748">
    <property type="entry name" value="Phosphoglycerate kinase"/>
    <property type="match status" value="1"/>
</dbReference>
<dbReference type="PROSITE" id="PS00111">
    <property type="entry name" value="PGLYCERATE_KINASE"/>
    <property type="match status" value="1"/>
</dbReference>
<comment type="catalytic activity">
    <reaction evidence="1">
        <text>(2R)-3-phosphoglycerate + ATP = (2R)-3-phospho-glyceroyl phosphate + ADP</text>
        <dbReference type="Rhea" id="RHEA:14801"/>
        <dbReference type="ChEBI" id="CHEBI:30616"/>
        <dbReference type="ChEBI" id="CHEBI:57604"/>
        <dbReference type="ChEBI" id="CHEBI:58272"/>
        <dbReference type="ChEBI" id="CHEBI:456216"/>
        <dbReference type="EC" id="2.7.2.3"/>
    </reaction>
</comment>
<comment type="pathway">
    <text evidence="1">Carbohydrate degradation; glycolysis; pyruvate from D-glyceraldehyde 3-phosphate: step 2/5.</text>
</comment>
<comment type="subunit">
    <text evidence="1">Monomer.</text>
</comment>
<comment type="subcellular location">
    <subcellularLocation>
        <location evidence="1">Cytoplasm</location>
    </subcellularLocation>
</comment>
<comment type="similarity">
    <text evidence="1">Belongs to the phosphoglycerate kinase family.</text>
</comment>
<protein>
    <recommendedName>
        <fullName evidence="1">Phosphoglycerate kinase</fullName>
        <ecNumber evidence="1">2.7.2.3</ecNumber>
    </recommendedName>
</protein>
<sequence length="407" mass="42410">MAVKTLEDLLNDGDREIAGRGVLVRSDLNVPLDDNGAITDPGRIIASVPTLEALAEAGAKVIVTAHLGRPKGGPDPKYSLKPVAAALSEKLGRHVQLAGDVVGTDALARAEGLTDGDVLLLENIRFDPRETSKDDGERRKLAEALVELVGDDGAFVSDGFGVVHRKQASVYDIATLLPHYAGTLVAAEVKVLEQLTSSTDRPYAVVLGGSKVSDKLAVIESLAKKADSLVIGGGMCFTFLASQGVSVGKSLVQPEMIDTCRELLDTYGDVIHLPVDIVVAPEFSADAEPETVAADRIPEDKMGLDIGPESVKRFTNLLSNARTVFWNGPMGVFEFPAFAAGTKGVAEAIIGATAKGAFSVVGGGDSAAAVRQLGLAEDGFSHISTGGGASLEYLEGKELPGIQVLES</sequence>
<gene>
    <name evidence="1" type="primary">pgk</name>
    <name type="ordered locus">Mkms_2451</name>
</gene>
<organism>
    <name type="scientific">Mycobacterium sp. (strain KMS)</name>
    <dbReference type="NCBI Taxonomy" id="189918"/>
    <lineage>
        <taxon>Bacteria</taxon>
        <taxon>Bacillati</taxon>
        <taxon>Actinomycetota</taxon>
        <taxon>Actinomycetes</taxon>
        <taxon>Mycobacteriales</taxon>
        <taxon>Mycobacteriaceae</taxon>
        <taxon>Mycobacterium</taxon>
    </lineage>
</organism>
<reference key="1">
    <citation type="submission" date="2006-12" db="EMBL/GenBank/DDBJ databases">
        <title>Complete sequence of chromosome of Mycobacterium sp. KMS.</title>
        <authorList>
            <consortium name="US DOE Joint Genome Institute"/>
            <person name="Copeland A."/>
            <person name="Lucas S."/>
            <person name="Lapidus A."/>
            <person name="Barry K."/>
            <person name="Detter J.C."/>
            <person name="Glavina del Rio T."/>
            <person name="Hammon N."/>
            <person name="Israni S."/>
            <person name="Dalin E."/>
            <person name="Tice H."/>
            <person name="Pitluck S."/>
            <person name="Kiss H."/>
            <person name="Brettin T."/>
            <person name="Bruce D."/>
            <person name="Han C."/>
            <person name="Tapia R."/>
            <person name="Gilna P."/>
            <person name="Schmutz J."/>
            <person name="Larimer F."/>
            <person name="Land M."/>
            <person name="Hauser L."/>
            <person name="Kyrpides N."/>
            <person name="Mikhailova N."/>
            <person name="Miller C.D."/>
            <person name="Richardson P."/>
        </authorList>
    </citation>
    <scope>NUCLEOTIDE SEQUENCE [LARGE SCALE GENOMIC DNA]</scope>
    <source>
        <strain>KMS</strain>
    </source>
</reference>